<comment type="function">
    <text evidence="1">Catalyzes the transfer of the gamma-phosphate of ATP to D-galactose to form alpha-D-galactose-1-phosphate (Gal-1-P).</text>
</comment>
<comment type="catalytic activity">
    <reaction evidence="1">
        <text>alpha-D-galactose + ATP = alpha-D-galactose 1-phosphate + ADP + H(+)</text>
        <dbReference type="Rhea" id="RHEA:13553"/>
        <dbReference type="ChEBI" id="CHEBI:15378"/>
        <dbReference type="ChEBI" id="CHEBI:28061"/>
        <dbReference type="ChEBI" id="CHEBI:30616"/>
        <dbReference type="ChEBI" id="CHEBI:58336"/>
        <dbReference type="ChEBI" id="CHEBI:456216"/>
        <dbReference type="EC" id="2.7.1.6"/>
    </reaction>
</comment>
<comment type="pathway">
    <text evidence="1">Carbohydrate metabolism; galactose metabolism.</text>
</comment>
<comment type="subcellular location">
    <subcellularLocation>
        <location evidence="1">Cytoplasm</location>
    </subcellularLocation>
</comment>
<comment type="similarity">
    <text evidence="1">Belongs to the GHMP kinase family. GalK subfamily.</text>
</comment>
<organism>
    <name type="scientific">Haemophilus influenzae (strain PittGG)</name>
    <dbReference type="NCBI Taxonomy" id="374931"/>
    <lineage>
        <taxon>Bacteria</taxon>
        <taxon>Pseudomonadati</taxon>
        <taxon>Pseudomonadota</taxon>
        <taxon>Gammaproteobacteria</taxon>
        <taxon>Pasteurellales</taxon>
        <taxon>Pasteurellaceae</taxon>
        <taxon>Haemophilus</taxon>
    </lineage>
</organism>
<keyword id="KW-0067">ATP-binding</keyword>
<keyword id="KW-0119">Carbohydrate metabolism</keyword>
<keyword id="KW-0963">Cytoplasm</keyword>
<keyword id="KW-0299">Galactose metabolism</keyword>
<keyword id="KW-0418">Kinase</keyword>
<keyword id="KW-0460">Magnesium</keyword>
<keyword id="KW-0479">Metal-binding</keyword>
<keyword id="KW-0547">Nucleotide-binding</keyword>
<keyword id="KW-0808">Transferase</keyword>
<sequence>MTPIQNAQQIFNRQHKNLPEITVYAPGRVNIIGEHTDYNDGFVMPCAINFGTAVSGTKRDDHIWNVYAADLDETDEFSLNVEIPKSEHKWANYVRGVVKFIQERYPDFQQGANLVISGNVPLSSGLSSSAALEVAVGKFCQQLGDLPLSHTDIALNGQKAENQFVGANCGNMDQLISALGQENHLLMIDCRSLETTPTPVPQDVAVIIVNSNVPHDLVTGEYNTRRQQCEEAAKFFDVKALRDVSVEQFQKREAELTALSPLAAKRARHVVTENQRVLDAVEALKNNDLTCLGKLMEASHDSMRDDFEITVPQIDYLVELVQLVIGKSGGARMTGGGFGGCIVALAPHDKVDAVRKIIADNYEKTTGLKETFYVCTASQGVRVI</sequence>
<protein>
    <recommendedName>
        <fullName evidence="1">Galactokinase</fullName>
        <ecNumber evidence="1">2.7.1.6</ecNumber>
    </recommendedName>
    <alternativeName>
        <fullName evidence="1">Galactose kinase</fullName>
    </alternativeName>
</protein>
<dbReference type="EC" id="2.7.1.6" evidence="1"/>
<dbReference type="EMBL" id="CP000672">
    <property type="protein sequence ID" value="ABR00376.1"/>
    <property type="molecule type" value="Genomic_DNA"/>
</dbReference>
<dbReference type="SMR" id="A5UHX0"/>
<dbReference type="KEGG" id="hiq:CGSHiGG_07595"/>
<dbReference type="HOGENOM" id="CLU_017814_2_1_6"/>
<dbReference type="UniPathway" id="UPA00214"/>
<dbReference type="Proteomes" id="UP000001990">
    <property type="component" value="Chromosome"/>
</dbReference>
<dbReference type="GO" id="GO:0005829">
    <property type="term" value="C:cytosol"/>
    <property type="evidence" value="ECO:0007669"/>
    <property type="project" value="TreeGrafter"/>
</dbReference>
<dbReference type="GO" id="GO:0005524">
    <property type="term" value="F:ATP binding"/>
    <property type="evidence" value="ECO:0007669"/>
    <property type="project" value="UniProtKB-UniRule"/>
</dbReference>
<dbReference type="GO" id="GO:0004335">
    <property type="term" value="F:galactokinase activity"/>
    <property type="evidence" value="ECO:0007669"/>
    <property type="project" value="UniProtKB-UniRule"/>
</dbReference>
<dbReference type="GO" id="GO:0000287">
    <property type="term" value="F:magnesium ion binding"/>
    <property type="evidence" value="ECO:0007669"/>
    <property type="project" value="UniProtKB-UniRule"/>
</dbReference>
<dbReference type="GO" id="GO:0006012">
    <property type="term" value="P:galactose metabolic process"/>
    <property type="evidence" value="ECO:0007669"/>
    <property type="project" value="UniProtKB-UniRule"/>
</dbReference>
<dbReference type="FunFam" id="3.30.230.10:FF:000017">
    <property type="entry name" value="Galactokinase"/>
    <property type="match status" value="1"/>
</dbReference>
<dbReference type="FunFam" id="3.30.70.890:FF:000001">
    <property type="entry name" value="Galactokinase"/>
    <property type="match status" value="1"/>
</dbReference>
<dbReference type="Gene3D" id="3.30.230.10">
    <property type="match status" value="1"/>
</dbReference>
<dbReference type="Gene3D" id="3.30.70.890">
    <property type="entry name" value="GHMP kinase, C-terminal domain"/>
    <property type="match status" value="1"/>
</dbReference>
<dbReference type="HAMAP" id="MF_00246">
    <property type="entry name" value="Galactokinase"/>
    <property type="match status" value="1"/>
</dbReference>
<dbReference type="InterPro" id="IPR000705">
    <property type="entry name" value="Galactokinase"/>
</dbReference>
<dbReference type="InterPro" id="IPR022963">
    <property type="entry name" value="Galactokinase_bac"/>
</dbReference>
<dbReference type="InterPro" id="IPR019741">
    <property type="entry name" value="Galactokinase_CS"/>
</dbReference>
<dbReference type="InterPro" id="IPR019539">
    <property type="entry name" value="GalKase_N"/>
</dbReference>
<dbReference type="InterPro" id="IPR013750">
    <property type="entry name" value="GHMP_kinase_C_dom"/>
</dbReference>
<dbReference type="InterPro" id="IPR036554">
    <property type="entry name" value="GHMP_kinase_C_sf"/>
</dbReference>
<dbReference type="InterPro" id="IPR006204">
    <property type="entry name" value="GHMP_kinase_N_dom"/>
</dbReference>
<dbReference type="InterPro" id="IPR006203">
    <property type="entry name" value="GHMP_knse_ATP-bd_CS"/>
</dbReference>
<dbReference type="InterPro" id="IPR006206">
    <property type="entry name" value="Mevalonate/galactokinase"/>
</dbReference>
<dbReference type="InterPro" id="IPR020568">
    <property type="entry name" value="Ribosomal_Su5_D2-typ_SF"/>
</dbReference>
<dbReference type="InterPro" id="IPR014721">
    <property type="entry name" value="Ribsml_uS5_D2-typ_fold_subgr"/>
</dbReference>
<dbReference type="NCBIfam" id="TIGR00131">
    <property type="entry name" value="gal_kin"/>
    <property type="match status" value="1"/>
</dbReference>
<dbReference type="NCBIfam" id="NF003472">
    <property type="entry name" value="PRK05101.1"/>
    <property type="match status" value="1"/>
</dbReference>
<dbReference type="PANTHER" id="PTHR10457:SF7">
    <property type="entry name" value="GALACTOKINASE-RELATED"/>
    <property type="match status" value="1"/>
</dbReference>
<dbReference type="PANTHER" id="PTHR10457">
    <property type="entry name" value="MEVALONATE KINASE/GALACTOKINASE"/>
    <property type="match status" value="1"/>
</dbReference>
<dbReference type="Pfam" id="PF10509">
    <property type="entry name" value="GalKase_gal_bdg"/>
    <property type="match status" value="1"/>
</dbReference>
<dbReference type="Pfam" id="PF08544">
    <property type="entry name" value="GHMP_kinases_C"/>
    <property type="match status" value="1"/>
</dbReference>
<dbReference type="Pfam" id="PF00288">
    <property type="entry name" value="GHMP_kinases_N"/>
    <property type="match status" value="1"/>
</dbReference>
<dbReference type="PIRSF" id="PIRSF000530">
    <property type="entry name" value="Galactokinase"/>
    <property type="match status" value="1"/>
</dbReference>
<dbReference type="PRINTS" id="PR00473">
    <property type="entry name" value="GALCTOKINASE"/>
</dbReference>
<dbReference type="PRINTS" id="PR00959">
    <property type="entry name" value="MEVGALKINASE"/>
</dbReference>
<dbReference type="SUPFAM" id="SSF55060">
    <property type="entry name" value="GHMP Kinase, C-terminal domain"/>
    <property type="match status" value="1"/>
</dbReference>
<dbReference type="SUPFAM" id="SSF54211">
    <property type="entry name" value="Ribosomal protein S5 domain 2-like"/>
    <property type="match status" value="1"/>
</dbReference>
<dbReference type="PROSITE" id="PS00106">
    <property type="entry name" value="GALACTOKINASE"/>
    <property type="match status" value="1"/>
</dbReference>
<dbReference type="PROSITE" id="PS00627">
    <property type="entry name" value="GHMP_KINASES_ATP"/>
    <property type="match status" value="1"/>
</dbReference>
<accession>A5UHX0</accession>
<proteinExistence type="inferred from homology"/>
<reference key="1">
    <citation type="journal article" date="2007" name="Genome Biol.">
        <title>Characterization and modeling of the Haemophilus influenzae core and supragenomes based on the complete genomic sequences of Rd and 12 clinical nontypeable strains.</title>
        <authorList>
            <person name="Hogg J.S."/>
            <person name="Hu F.Z."/>
            <person name="Janto B."/>
            <person name="Boissy R."/>
            <person name="Hayes J."/>
            <person name="Keefe R."/>
            <person name="Post J.C."/>
            <person name="Ehrlich G.D."/>
        </authorList>
    </citation>
    <scope>NUCLEOTIDE SEQUENCE [LARGE SCALE GENOMIC DNA]</scope>
    <source>
        <strain>PittGG</strain>
    </source>
</reference>
<feature type="chain" id="PRO_1000005753" description="Galactokinase">
    <location>
        <begin position="1"/>
        <end position="384"/>
    </location>
</feature>
<feature type="active site" description="Proton acceptor" evidence="1">
    <location>
        <position position="173"/>
    </location>
</feature>
<feature type="binding site" evidence="1">
    <location>
        <begin position="34"/>
        <end position="37"/>
    </location>
    <ligand>
        <name>substrate</name>
    </ligand>
</feature>
<feature type="binding site" evidence="1">
    <location>
        <begin position="123"/>
        <end position="129"/>
    </location>
    <ligand>
        <name>ATP</name>
        <dbReference type="ChEBI" id="CHEBI:30616"/>
    </ligand>
</feature>
<feature type="binding site" evidence="1">
    <location>
        <position position="129"/>
    </location>
    <ligand>
        <name>Mg(2+)</name>
        <dbReference type="ChEBI" id="CHEBI:18420"/>
    </ligand>
</feature>
<feature type="binding site" evidence="1">
    <location>
        <position position="161"/>
    </location>
    <ligand>
        <name>Mg(2+)</name>
        <dbReference type="ChEBI" id="CHEBI:18420"/>
    </ligand>
</feature>
<feature type="binding site" evidence="1">
    <location>
        <position position="222"/>
    </location>
    <ligand>
        <name>substrate</name>
    </ligand>
</feature>
<feature type="site" description="Transition state stabilizer" evidence="1">
    <location>
        <position position="28"/>
    </location>
</feature>
<evidence type="ECO:0000255" key="1">
    <source>
        <dbReference type="HAMAP-Rule" id="MF_00246"/>
    </source>
</evidence>
<name>GAL1_HAEIG</name>
<gene>
    <name evidence="1" type="primary">galK</name>
    <name type="ordered locus">CGSHiGG_07595</name>
</gene>